<dbReference type="EMBL" id="AB051517">
    <property type="protein sequence ID" value="BAB21821.1"/>
    <property type="status" value="ALT_INIT"/>
    <property type="molecule type" value="mRNA"/>
</dbReference>
<dbReference type="EMBL" id="AK023518">
    <property type="protein sequence ID" value="BAB14596.1"/>
    <property type="molecule type" value="mRNA"/>
</dbReference>
<dbReference type="EMBL" id="BC029832">
    <property type="protein sequence ID" value="AAH29832.2"/>
    <property type="molecule type" value="mRNA"/>
</dbReference>
<dbReference type="CCDS" id="CCDS30717.1">
    <molecule id="Q9C0D3-1"/>
</dbReference>
<dbReference type="RefSeq" id="NP_078922.1">
    <molecule id="Q9C0D3-1"/>
    <property type="nucleotide sequence ID" value="NM_024646.3"/>
</dbReference>
<dbReference type="PDB" id="7EP0">
    <property type="method" value="X-ray"/>
    <property type="resolution" value="2.16 A"/>
    <property type="chains" value="A/B=480-728"/>
</dbReference>
<dbReference type="PDB" id="7EP1">
    <property type="method" value="X-ray"/>
    <property type="resolution" value="1.85 A"/>
    <property type="chains" value="A/B=485-728"/>
</dbReference>
<dbReference type="PDB" id="7EP2">
    <property type="method" value="X-ray"/>
    <property type="resolution" value="2.38 A"/>
    <property type="chains" value="A/B/C/D=443-728"/>
</dbReference>
<dbReference type="PDB" id="7XV7">
    <property type="method" value="X-ray"/>
    <property type="resolution" value="2.60 A"/>
    <property type="chains" value="A/B=485-728"/>
</dbReference>
<dbReference type="PDB" id="7XYV">
    <property type="method" value="X-ray"/>
    <property type="resolution" value="2.52 A"/>
    <property type="chains" value="A/B=485-728"/>
</dbReference>
<dbReference type="PDB" id="7XYW">
    <property type="method" value="X-ray"/>
    <property type="resolution" value="2.50 A"/>
    <property type="chains" value="A/B=485-728"/>
</dbReference>
<dbReference type="PDB" id="7XYX">
    <property type="method" value="X-ray"/>
    <property type="resolution" value="2.87 A"/>
    <property type="chains" value="A/B=485-728"/>
</dbReference>
<dbReference type="PDB" id="7YC2">
    <property type="method" value="X-ray"/>
    <property type="resolution" value="2.90 A"/>
    <property type="chains" value="A/B/C/D=490-728"/>
</dbReference>
<dbReference type="PDBsum" id="7EP0"/>
<dbReference type="PDBsum" id="7EP1"/>
<dbReference type="PDBsum" id="7EP2"/>
<dbReference type="PDBsum" id="7XV7"/>
<dbReference type="PDBsum" id="7XYV"/>
<dbReference type="PDBsum" id="7XYW"/>
<dbReference type="PDBsum" id="7XYX"/>
<dbReference type="PDBsum" id="7YC2"/>
<dbReference type="SMR" id="Q9C0D3"/>
<dbReference type="BioGRID" id="122820">
    <property type="interactions" value="121"/>
</dbReference>
<dbReference type="ComplexPortal" id="CPX-2220">
    <property type="entry name" value="ZYG11B-Elongin C-Elongin B E3 ubiquitin ligase complex"/>
</dbReference>
<dbReference type="CORUM" id="Q9C0D3"/>
<dbReference type="FunCoup" id="Q9C0D3">
    <property type="interactions" value="529"/>
</dbReference>
<dbReference type="IntAct" id="Q9C0D3">
    <property type="interactions" value="81"/>
</dbReference>
<dbReference type="MINT" id="Q9C0D3"/>
<dbReference type="STRING" id="9606.ENSP00000294353"/>
<dbReference type="GlyGen" id="Q9C0D3">
    <property type="glycosylation" value="1 site, 1 O-linked glycan (1 site)"/>
</dbReference>
<dbReference type="iPTMnet" id="Q9C0D3"/>
<dbReference type="PhosphoSitePlus" id="Q9C0D3"/>
<dbReference type="SwissPalm" id="Q9C0D3"/>
<dbReference type="BioMuta" id="ZYG11B"/>
<dbReference type="DMDM" id="158706479"/>
<dbReference type="jPOST" id="Q9C0D3"/>
<dbReference type="MassIVE" id="Q9C0D3"/>
<dbReference type="PaxDb" id="9606-ENSP00000294353"/>
<dbReference type="PeptideAtlas" id="Q9C0D3"/>
<dbReference type="ProteomicsDB" id="80011">
    <molecule id="Q9C0D3-1"/>
</dbReference>
<dbReference type="ProteomicsDB" id="80012">
    <molecule id="Q9C0D3-2"/>
</dbReference>
<dbReference type="Pumba" id="Q9C0D3"/>
<dbReference type="Antibodypedia" id="33029">
    <property type="antibodies" value="53 antibodies from 11 providers"/>
</dbReference>
<dbReference type="DNASU" id="79699"/>
<dbReference type="Ensembl" id="ENST00000294353.7">
    <molecule id="Q9C0D3-1"/>
    <property type="protein sequence ID" value="ENSP00000294353.6"/>
    <property type="gene ID" value="ENSG00000162378.13"/>
</dbReference>
<dbReference type="GeneID" id="79699"/>
<dbReference type="KEGG" id="hsa:79699"/>
<dbReference type="MANE-Select" id="ENST00000294353.7">
    <property type="protein sequence ID" value="ENSP00000294353.6"/>
    <property type="RefSeq nucleotide sequence ID" value="NM_024646.3"/>
    <property type="RefSeq protein sequence ID" value="NP_078922.1"/>
</dbReference>
<dbReference type="UCSC" id="uc001cuj.4">
    <molecule id="Q9C0D3-1"/>
    <property type="organism name" value="human"/>
</dbReference>
<dbReference type="AGR" id="HGNC:25820"/>
<dbReference type="CTD" id="79699"/>
<dbReference type="DisGeNET" id="79699"/>
<dbReference type="GeneCards" id="ZYG11B"/>
<dbReference type="HGNC" id="HGNC:25820">
    <property type="gene designation" value="ZYG11B"/>
</dbReference>
<dbReference type="HPA" id="ENSG00000162378">
    <property type="expression patterns" value="Tissue enhanced (skeletal muscle, tongue)"/>
</dbReference>
<dbReference type="MIM" id="618673">
    <property type="type" value="gene"/>
</dbReference>
<dbReference type="neXtProt" id="NX_Q9C0D3"/>
<dbReference type="OpenTargets" id="ENSG00000162378"/>
<dbReference type="PharmGKB" id="PA142670468"/>
<dbReference type="VEuPathDB" id="HostDB:ENSG00000162378"/>
<dbReference type="eggNOG" id="KOG3665">
    <property type="taxonomic scope" value="Eukaryota"/>
</dbReference>
<dbReference type="GeneTree" id="ENSGT00530000063187"/>
<dbReference type="HOGENOM" id="CLU_011533_1_0_1"/>
<dbReference type="InParanoid" id="Q9C0D3"/>
<dbReference type="OMA" id="QAWTLSH"/>
<dbReference type="OrthoDB" id="120976at2759"/>
<dbReference type="PAN-GO" id="Q9C0D3">
    <property type="GO annotations" value="1 GO annotation based on evolutionary models"/>
</dbReference>
<dbReference type="PhylomeDB" id="Q9C0D3"/>
<dbReference type="TreeFam" id="TF313007"/>
<dbReference type="PathwayCommons" id="Q9C0D3"/>
<dbReference type="SignaLink" id="Q9C0D3"/>
<dbReference type="BioGRID-ORCS" id="79699">
    <property type="hits" value="17 hits in 1199 CRISPR screens"/>
</dbReference>
<dbReference type="ChiTaRS" id="ZYG11B">
    <property type="organism name" value="human"/>
</dbReference>
<dbReference type="GenomeRNAi" id="79699"/>
<dbReference type="Pharos" id="Q9C0D3">
    <property type="development level" value="Tbio"/>
</dbReference>
<dbReference type="PRO" id="PR:Q9C0D3"/>
<dbReference type="Proteomes" id="UP000005640">
    <property type="component" value="Chromosome 1"/>
</dbReference>
<dbReference type="RNAct" id="Q9C0D3">
    <property type="molecule type" value="protein"/>
</dbReference>
<dbReference type="Bgee" id="ENSG00000162378">
    <property type="expression patterns" value="Expressed in deltoid and 199 other cell types or tissues"/>
</dbReference>
<dbReference type="ExpressionAtlas" id="Q9C0D3">
    <property type="expression patterns" value="baseline and differential"/>
</dbReference>
<dbReference type="GO" id="GO:0031462">
    <property type="term" value="C:Cul2-RING ubiquitin ligase complex"/>
    <property type="evidence" value="ECO:0000314"/>
    <property type="project" value="UniProtKB"/>
</dbReference>
<dbReference type="GO" id="GO:0005737">
    <property type="term" value="C:cytoplasm"/>
    <property type="evidence" value="ECO:0007669"/>
    <property type="project" value="UniProtKB-SubCell"/>
</dbReference>
<dbReference type="GO" id="GO:0032436">
    <property type="term" value="P:positive regulation of proteasomal ubiquitin-dependent protein catabolic process"/>
    <property type="evidence" value="ECO:0000315"/>
    <property type="project" value="UniProtKB"/>
</dbReference>
<dbReference type="GO" id="GO:0006515">
    <property type="term" value="P:protein quality control for misfolded or incompletely synthesized proteins"/>
    <property type="evidence" value="ECO:0000315"/>
    <property type="project" value="UniProtKB"/>
</dbReference>
<dbReference type="FunFam" id="3.80.10.10:FF:001025">
    <property type="entry name" value="Protein zyg-11 homolog A"/>
    <property type="match status" value="1"/>
</dbReference>
<dbReference type="FunFam" id="1.25.10.10:FF:000086">
    <property type="entry name" value="protein zyg-11 homolog B isoform X2"/>
    <property type="match status" value="1"/>
</dbReference>
<dbReference type="Gene3D" id="1.25.10.10">
    <property type="entry name" value="Leucine-rich Repeat Variant"/>
    <property type="match status" value="1"/>
</dbReference>
<dbReference type="Gene3D" id="3.80.10.10">
    <property type="entry name" value="Ribonuclease Inhibitor"/>
    <property type="match status" value="2"/>
</dbReference>
<dbReference type="InterPro" id="IPR011989">
    <property type="entry name" value="ARM-like"/>
</dbReference>
<dbReference type="InterPro" id="IPR016024">
    <property type="entry name" value="ARM-type_fold"/>
</dbReference>
<dbReference type="InterPro" id="IPR001611">
    <property type="entry name" value="Leu-rich_rpt"/>
</dbReference>
<dbReference type="InterPro" id="IPR032675">
    <property type="entry name" value="LRR_dom_sf"/>
</dbReference>
<dbReference type="InterPro" id="IPR056845">
    <property type="entry name" value="LRR_Zer-1"/>
</dbReference>
<dbReference type="InterPro" id="IPR055142">
    <property type="entry name" value="ZER1-like_C"/>
</dbReference>
<dbReference type="InterPro" id="IPR051341">
    <property type="entry name" value="Zyg-11_UBL_adapter"/>
</dbReference>
<dbReference type="PANTHER" id="PTHR12904">
    <property type="match status" value="1"/>
</dbReference>
<dbReference type="PANTHER" id="PTHR12904:SF21">
    <property type="entry name" value="PROTEIN ZYG-11 HOMOLOG B"/>
    <property type="match status" value="1"/>
</dbReference>
<dbReference type="Pfam" id="PF25013">
    <property type="entry name" value="LRR_Zer-1"/>
    <property type="match status" value="1"/>
</dbReference>
<dbReference type="Pfam" id="PF22964">
    <property type="entry name" value="ZER1-like_2nd"/>
    <property type="match status" value="1"/>
</dbReference>
<dbReference type="SUPFAM" id="SSF48371">
    <property type="entry name" value="ARM repeat"/>
    <property type="match status" value="1"/>
</dbReference>
<dbReference type="SUPFAM" id="SSF52047">
    <property type="entry name" value="RNI-like"/>
    <property type="match status" value="1"/>
</dbReference>
<dbReference type="PROSITE" id="PS51450">
    <property type="entry name" value="LRR"/>
    <property type="match status" value="1"/>
</dbReference>
<keyword id="KW-0002">3D-structure</keyword>
<keyword id="KW-0025">Alternative splicing</keyword>
<keyword id="KW-0963">Cytoplasm</keyword>
<keyword id="KW-0945">Host-virus interaction</keyword>
<keyword id="KW-0433">Leucine-rich repeat</keyword>
<keyword id="KW-1267">Proteomics identification</keyword>
<keyword id="KW-1185">Reference proteome</keyword>
<keyword id="KW-0677">Repeat</keyword>
<keyword id="KW-0832">Ubl conjugation</keyword>
<keyword id="KW-0833">Ubl conjugation pathway</keyword>
<comment type="function">
    <text evidence="2 3 4 5 6 7">Serves as substrate adapter subunit in the E3 ubiquitin ligase complex ZYG11B-CUL2-Elongin BC. Acts to target substrates bearing N-terminal degrons for proteasomal degradation with the first four residues of substrates being the key recognition elements (PubMed:33093214, PubMed:34214466, PubMed:35636250). Prefers Nt-Gly but also has the capacity to recognize Nt-Ser, -Ala and -Cys (PubMed:36496439). Involved in the clearance of proteolytic fragments generated by caspase cleavage during apoptosis since N-terminal glycine degrons are strongly enriched at caspase cleavage sites. Also important in the quality control of protein N-myristoylation in which N-terminal glycine degrons are conditionally exposed after a failure of N-myristoylation (PubMed:31273098). In addition, plays a role in the amplification of cGAS to enhance innate immune response. Mechanistically, strengthens the processes of cGAS binding with dsDNA and assembling oligomers and also accelerates and stabilizes cGAS-DNA condensation, thereby enhancing production of antiviral IFNs and inflammatory cytokines (PubMed:36933219).</text>
</comment>
<comment type="subunit">
    <text evidence="5">(Microbial infection) Interacts with SARS-COV-2 protein ORF10.</text>
</comment>
<comment type="subunit">
    <text evidence="1">Interacts with ELOC/Elongin C. Part of an E3 ubiquitin ligase complex including ZYG11B, CUL2 and Elongin BC.</text>
</comment>
<comment type="interaction">
    <interactant intactId="EBI-1811414">
        <id>Q9C0D3</id>
    </interactant>
    <interactant intactId="EBI-3940599">
        <id>Q9HD20</id>
        <label>ATP13A1</label>
    </interactant>
    <organismsDiffer>false</organismsDiffer>
    <experiments>2</experiments>
</comment>
<comment type="interaction">
    <interactant intactId="EBI-1811414">
        <id>Q9C0D3</id>
    </interactant>
    <interactant intactId="EBI-456179">
        <id>Q13617</id>
        <label>CUL2</label>
    </interactant>
    <organismsDiffer>false</organismsDiffer>
    <experiments>6</experiments>
</comment>
<comment type="interaction">
    <interactant intactId="EBI-1811414">
        <id>Q9C0D3</id>
    </interactant>
    <interactant intactId="EBI-17724521">
        <id>Q92538-3</id>
        <label>GBF1</label>
    </interactant>
    <organismsDiffer>false</organismsDiffer>
    <experiments>3</experiments>
</comment>
<comment type="interaction">
    <interactant intactId="EBI-1811414">
        <id>Q9C0D3</id>
    </interactant>
    <interactant intactId="EBI-748974">
        <id>Q96CV9</id>
        <label>OPTN</label>
    </interactant>
    <organismsDiffer>false</organismsDiffer>
    <experiments>3</experiments>
</comment>
<comment type="subcellular location">
    <subcellularLocation>
        <location evidence="7">Cytoplasm</location>
    </subcellularLocation>
</comment>
<comment type="alternative products">
    <event type="alternative splicing"/>
    <isoform>
        <id>Q9C0D3-1</id>
        <name>1</name>
        <sequence type="displayed"/>
    </isoform>
    <isoform>
        <id>Q9C0D3-2</id>
        <name>2</name>
        <sequence type="described" ref="VSP_028224"/>
    </isoform>
</comment>
<comment type="PTM">
    <text evidence="7">(Microbial infection) Ubiquitinated; leading to proteasomal degradation in the presence of herpes simplex virus 1/HHV-1.</text>
</comment>
<comment type="similarity">
    <text evidence="9">Belongs to the zyg-11 family.</text>
</comment>
<comment type="sequence caution" evidence="9">
    <conflict type="erroneous initiation">
        <sequence resource="EMBL-CDS" id="BAB21821"/>
    </conflict>
    <text>Extended N-terminus.</text>
</comment>
<accession>Q9C0D3</accession>
<accession>Q8N2X3</accession>
<accession>Q9H8L8</accession>
<name>ZY11B_HUMAN</name>
<reference key="1">
    <citation type="journal article" date="2000" name="DNA Res.">
        <title>Prediction of the coding sequences of unidentified human genes. XIX. The complete sequences of 100 new cDNA clones from brain which code for large proteins in vitro.</title>
        <authorList>
            <person name="Nagase T."/>
            <person name="Kikuno R."/>
            <person name="Hattori A."/>
            <person name="Kondo Y."/>
            <person name="Okumura K."/>
            <person name="Ohara O."/>
        </authorList>
    </citation>
    <scope>NUCLEOTIDE SEQUENCE [LARGE SCALE MRNA] (ISOFORM 1)</scope>
    <source>
        <tissue>Brain</tissue>
    </source>
</reference>
<reference key="2">
    <citation type="journal article" date="2004" name="Nat. Genet.">
        <title>Complete sequencing and characterization of 21,243 full-length human cDNAs.</title>
        <authorList>
            <person name="Ota T."/>
            <person name="Suzuki Y."/>
            <person name="Nishikawa T."/>
            <person name="Otsuki T."/>
            <person name="Sugiyama T."/>
            <person name="Irie R."/>
            <person name="Wakamatsu A."/>
            <person name="Hayashi K."/>
            <person name="Sato H."/>
            <person name="Nagai K."/>
            <person name="Kimura K."/>
            <person name="Makita H."/>
            <person name="Sekine M."/>
            <person name="Obayashi M."/>
            <person name="Nishi T."/>
            <person name="Shibahara T."/>
            <person name="Tanaka T."/>
            <person name="Ishii S."/>
            <person name="Yamamoto J."/>
            <person name="Saito K."/>
            <person name="Kawai Y."/>
            <person name="Isono Y."/>
            <person name="Nakamura Y."/>
            <person name="Nagahari K."/>
            <person name="Murakami K."/>
            <person name="Yasuda T."/>
            <person name="Iwayanagi T."/>
            <person name="Wagatsuma M."/>
            <person name="Shiratori A."/>
            <person name="Sudo H."/>
            <person name="Hosoiri T."/>
            <person name="Kaku Y."/>
            <person name="Kodaira H."/>
            <person name="Kondo H."/>
            <person name="Sugawara M."/>
            <person name="Takahashi M."/>
            <person name="Kanda K."/>
            <person name="Yokoi T."/>
            <person name="Furuya T."/>
            <person name="Kikkawa E."/>
            <person name="Omura Y."/>
            <person name="Abe K."/>
            <person name="Kamihara K."/>
            <person name="Katsuta N."/>
            <person name="Sato K."/>
            <person name="Tanikawa M."/>
            <person name="Yamazaki M."/>
            <person name="Ninomiya K."/>
            <person name="Ishibashi T."/>
            <person name="Yamashita H."/>
            <person name="Murakawa K."/>
            <person name="Fujimori K."/>
            <person name="Tanai H."/>
            <person name="Kimata M."/>
            <person name="Watanabe M."/>
            <person name="Hiraoka S."/>
            <person name="Chiba Y."/>
            <person name="Ishida S."/>
            <person name="Ono Y."/>
            <person name="Takiguchi S."/>
            <person name="Watanabe S."/>
            <person name="Yosida M."/>
            <person name="Hotuta T."/>
            <person name="Kusano J."/>
            <person name="Kanehori K."/>
            <person name="Takahashi-Fujii A."/>
            <person name="Hara H."/>
            <person name="Tanase T.-O."/>
            <person name="Nomura Y."/>
            <person name="Togiya S."/>
            <person name="Komai F."/>
            <person name="Hara R."/>
            <person name="Takeuchi K."/>
            <person name="Arita M."/>
            <person name="Imose N."/>
            <person name="Musashino K."/>
            <person name="Yuuki H."/>
            <person name="Oshima A."/>
            <person name="Sasaki N."/>
            <person name="Aotsuka S."/>
            <person name="Yoshikawa Y."/>
            <person name="Matsunawa H."/>
            <person name="Ichihara T."/>
            <person name="Shiohata N."/>
            <person name="Sano S."/>
            <person name="Moriya S."/>
            <person name="Momiyama H."/>
            <person name="Satoh N."/>
            <person name="Takami S."/>
            <person name="Terashima Y."/>
            <person name="Suzuki O."/>
            <person name="Nakagawa S."/>
            <person name="Senoh A."/>
            <person name="Mizoguchi H."/>
            <person name="Goto Y."/>
            <person name="Shimizu F."/>
            <person name="Wakebe H."/>
            <person name="Hishigaki H."/>
            <person name="Watanabe T."/>
            <person name="Sugiyama A."/>
            <person name="Takemoto M."/>
            <person name="Kawakami B."/>
            <person name="Yamazaki M."/>
            <person name="Watanabe K."/>
            <person name="Kumagai A."/>
            <person name="Itakura S."/>
            <person name="Fukuzumi Y."/>
            <person name="Fujimori Y."/>
            <person name="Komiyama M."/>
            <person name="Tashiro H."/>
            <person name="Tanigami A."/>
            <person name="Fujiwara T."/>
            <person name="Ono T."/>
            <person name="Yamada K."/>
            <person name="Fujii Y."/>
            <person name="Ozaki K."/>
            <person name="Hirao M."/>
            <person name="Ohmori Y."/>
            <person name="Kawabata A."/>
            <person name="Hikiji T."/>
            <person name="Kobatake N."/>
            <person name="Inagaki H."/>
            <person name="Ikema Y."/>
            <person name="Okamoto S."/>
            <person name="Okitani R."/>
            <person name="Kawakami T."/>
            <person name="Noguchi S."/>
            <person name="Itoh T."/>
            <person name="Shigeta K."/>
            <person name="Senba T."/>
            <person name="Matsumura K."/>
            <person name="Nakajima Y."/>
            <person name="Mizuno T."/>
            <person name="Morinaga M."/>
            <person name="Sasaki M."/>
            <person name="Togashi T."/>
            <person name="Oyama M."/>
            <person name="Hata H."/>
            <person name="Watanabe M."/>
            <person name="Komatsu T."/>
            <person name="Mizushima-Sugano J."/>
            <person name="Satoh T."/>
            <person name="Shirai Y."/>
            <person name="Takahashi Y."/>
            <person name="Nakagawa K."/>
            <person name="Okumura K."/>
            <person name="Nagase T."/>
            <person name="Nomura N."/>
            <person name="Kikuchi H."/>
            <person name="Masuho Y."/>
            <person name="Yamashita R."/>
            <person name="Nakai K."/>
            <person name="Yada T."/>
            <person name="Nakamura Y."/>
            <person name="Ohara O."/>
            <person name="Isogai T."/>
            <person name="Sugano S."/>
        </authorList>
    </citation>
    <scope>NUCLEOTIDE SEQUENCE [LARGE SCALE MRNA] (ISOFORM 2)</scope>
    <source>
        <tissue>Placenta</tissue>
    </source>
</reference>
<reference key="3">
    <citation type="journal article" date="2004" name="Genome Res.">
        <title>The status, quality, and expansion of the NIH full-length cDNA project: the Mammalian Gene Collection (MGC).</title>
        <authorList>
            <consortium name="The MGC Project Team"/>
        </authorList>
    </citation>
    <scope>NUCLEOTIDE SEQUENCE [LARGE SCALE MRNA] OF 265-744 (ISOFORM 1)</scope>
    <source>
        <tissue>Brain</tissue>
    </source>
</reference>
<reference key="4">
    <citation type="journal article" date="2007" name="EMBO Rep.">
        <title>The Caenorhabditis elegans cell-cycle regulator ZYG-11 defines a conserved family of CUL-2 complex components.</title>
        <authorList>
            <person name="Vasudevan S."/>
            <person name="Starostina N.G."/>
            <person name="Kipreos E.T."/>
        </authorList>
    </citation>
    <scope>INTERACTION WITH ELOC</scope>
    <scope>IDENTIFICATION IN COMPLEX WITH ELOC AND CUL2</scope>
    <scope>MUTAGENESIS OF LEU-18</scope>
</reference>
<reference key="5">
    <citation type="journal article" date="2011" name="BMC Syst. Biol.">
        <title>Initial characterization of the human central proteome.</title>
        <authorList>
            <person name="Burkard T.R."/>
            <person name="Planyavsky M."/>
            <person name="Kaupe I."/>
            <person name="Breitwieser F.P."/>
            <person name="Buerckstuemmer T."/>
            <person name="Bennett K.L."/>
            <person name="Superti-Furga G."/>
            <person name="Colinge J."/>
        </authorList>
    </citation>
    <scope>IDENTIFICATION BY MASS SPECTROMETRY [LARGE SCALE ANALYSIS]</scope>
</reference>
<reference key="6">
    <citation type="journal article" date="2019" name="Science">
        <title>A glycine-specific N-degron pathway mediates the quality control of protein N-myristoylation.</title>
        <authorList>
            <person name="Timms R.T."/>
            <person name="Zhang Z."/>
            <person name="Rhee D.Y."/>
            <person name="Harper J.W."/>
            <person name="Koren I."/>
            <person name="Elledge S.J."/>
        </authorList>
    </citation>
    <scope>FUNCTION</scope>
</reference>
<reference key="7">
    <citation type="journal article" date="2020" name="Science">
        <title>Enteroviral 3C protease activates the human NLRP1 inflammasome in airway epithelia.</title>
        <authorList>
            <person name="Robinson K.S."/>
            <person name="Teo D.E.T."/>
            <person name="Tan K.S."/>
            <person name="Toh G.A."/>
            <person name="Ong H.H."/>
            <person name="Lim C.K."/>
            <person name="Lay K."/>
            <person name="Au B.V."/>
            <person name="Lew T.S."/>
            <person name="Chu J.J.H."/>
            <person name="Chow V.T.K."/>
            <person name="Wang Y."/>
            <person name="Zhong F.L."/>
            <person name="Reversade B."/>
        </authorList>
    </citation>
    <scope>FUNCTION</scope>
</reference>
<reference key="8">
    <citation type="journal article" date="2023" name="Cell Rep.">
        <title>ZYG11B potentiates the antiviral innate immune response by enhancing cGAS-DNA binding and condensation.</title>
        <authorList>
            <person name="Zhang J."/>
            <person name="Zhou E.C."/>
            <person name="He Y."/>
            <person name="Chai Z.L."/>
            <person name="Ji B.Z."/>
            <person name="Tu Y."/>
            <person name="Wang H.L."/>
            <person name="Wu W.Q."/>
            <person name="Liu Y."/>
            <person name="Zhang X.H."/>
            <person name="Liu Y."/>
        </authorList>
    </citation>
    <scope>FUNCTION</scope>
    <scope>SUBCELLULAR LOCATION</scope>
    <scope>UBIQUITINATION (MICROBIAL INFECTION)</scope>
</reference>
<reference evidence="11 12 13" key="9">
    <citation type="journal article" date="2021" name="Mol. Cell">
        <title>Molecular basis for recognition of Gly/N-degrons by CRL2ZYG11B and CRL2ZER1.</title>
        <authorList>
            <person name="Yan X."/>
            <person name="Li Y."/>
            <person name="Wang G."/>
            <person name="Zhou Z."/>
            <person name="Song G."/>
            <person name="Feng Q."/>
            <person name="Zhao Y."/>
            <person name="Mi W."/>
            <person name="Ma Z."/>
            <person name="Dong C."/>
        </authorList>
    </citation>
    <scope>X-RAY CRYSTALLOGRAPHY (1.85 ANGSTROMS) OF 485-728</scope>
    <scope>FUNCTION</scope>
    <scope>MUTAGENESIS OF ASP-526; ASN-567 AND GLU-570</scope>
</reference>
<reference evidence="14" key="10">
    <citation type="journal article" date="2022" name="Biochem. Biophys. Res. Commun.">
        <title>Structural insights into ORF10 recognition by ZYG11B.</title>
        <authorList>
            <person name="Zhang B."/>
            <person name="Li Y."/>
            <person name="Feng Q."/>
            <person name="Song L."/>
            <person name="Dong C."/>
            <person name="Yan X."/>
        </authorList>
    </citation>
    <scope>X-RAY CRYSTALLOGRAPHY (2.60 ANGSTROMS) OF 485-728</scope>
    <scope>INTERACTION WITH SARS-COV-2 PROTEIN ORF10</scope>
</reference>
<reference evidence="15 16 17" key="11">
    <citation type="journal article" date="2022" name="Nat. Commun.">
        <title>CRL2ZER1/ZYG11B recognizes small N-terminal residues for degradation.</title>
        <authorList>
            <person name="Li Y."/>
            <person name="Zhao Y."/>
            <person name="Yan X."/>
            <person name="Ye C."/>
            <person name="Weirich S."/>
            <person name="Zhang B."/>
            <person name="Wang X."/>
            <person name="Song L."/>
            <person name="Jiang C."/>
            <person name="Jeltsch A."/>
            <person name="Dong C."/>
            <person name="Mi W."/>
        </authorList>
    </citation>
    <scope>X-RAY CRYSTALLOGRAPHY (2.50 ANGSTROMS) OF 485-728</scope>
    <scope>FUNCTION</scope>
    <scope>MUTAGENESIS OF TRP-522; ASN-523; ASP-526; ASN-567 AND GLU-570</scope>
</reference>
<proteinExistence type="evidence at protein level"/>
<organism>
    <name type="scientific">Homo sapiens</name>
    <name type="common">Human</name>
    <dbReference type="NCBI Taxonomy" id="9606"/>
    <lineage>
        <taxon>Eukaryota</taxon>
        <taxon>Metazoa</taxon>
        <taxon>Chordata</taxon>
        <taxon>Craniata</taxon>
        <taxon>Vertebrata</taxon>
        <taxon>Euteleostomi</taxon>
        <taxon>Mammalia</taxon>
        <taxon>Eutheria</taxon>
        <taxon>Euarchontoglires</taxon>
        <taxon>Primates</taxon>
        <taxon>Haplorrhini</taxon>
        <taxon>Catarrhini</taxon>
        <taxon>Hominidae</taxon>
        <taxon>Homo</taxon>
    </lineage>
</organism>
<evidence type="ECO:0000269" key="1">
    <source>
    </source>
</evidence>
<evidence type="ECO:0000269" key="2">
    <source>
    </source>
</evidence>
<evidence type="ECO:0000269" key="3">
    <source>
    </source>
</evidence>
<evidence type="ECO:0000269" key="4">
    <source>
    </source>
</evidence>
<evidence type="ECO:0000269" key="5">
    <source>
    </source>
</evidence>
<evidence type="ECO:0000269" key="6">
    <source>
    </source>
</evidence>
<evidence type="ECO:0000269" key="7">
    <source>
    </source>
</evidence>
<evidence type="ECO:0000303" key="8">
    <source>
    </source>
</evidence>
<evidence type="ECO:0000305" key="9"/>
<evidence type="ECO:0000312" key="10">
    <source>
        <dbReference type="HGNC" id="HGNC:25820"/>
    </source>
</evidence>
<evidence type="ECO:0007744" key="11">
    <source>
        <dbReference type="PDB" id="7EP0"/>
    </source>
</evidence>
<evidence type="ECO:0007744" key="12">
    <source>
        <dbReference type="PDB" id="7EP1"/>
    </source>
</evidence>
<evidence type="ECO:0007744" key="13">
    <source>
        <dbReference type="PDB" id="7EP2"/>
    </source>
</evidence>
<evidence type="ECO:0007744" key="14">
    <source>
        <dbReference type="PDB" id="7XV7"/>
    </source>
</evidence>
<evidence type="ECO:0007744" key="15">
    <source>
        <dbReference type="PDB" id="7XYV"/>
    </source>
</evidence>
<evidence type="ECO:0007744" key="16">
    <source>
        <dbReference type="PDB" id="7XYW"/>
    </source>
</evidence>
<evidence type="ECO:0007744" key="17">
    <source>
        <dbReference type="PDB" id="7XYX"/>
    </source>
</evidence>
<evidence type="ECO:0007829" key="18">
    <source>
        <dbReference type="PDB" id="7EP1"/>
    </source>
</evidence>
<evidence type="ECO:0007829" key="19">
    <source>
        <dbReference type="PDB" id="7EP2"/>
    </source>
</evidence>
<gene>
    <name evidence="10" type="primary">ZYG11B</name>
    <name type="synonym">KIAA1730</name>
</gene>
<feature type="chain" id="PRO_0000305087" description="Protein zyg-11 homolog B">
    <location>
        <begin position="1"/>
        <end position="744"/>
    </location>
</feature>
<feature type="repeat" description="LRR 1">
    <location>
        <begin position="185"/>
        <end position="208"/>
    </location>
</feature>
<feature type="repeat" description="LRR 2">
    <location>
        <begin position="216"/>
        <end position="236"/>
    </location>
</feature>
<feature type="repeat" description="LRR 3">
    <location>
        <begin position="237"/>
        <end position="261"/>
    </location>
</feature>
<feature type="splice variant" id="VSP_028224" description="In isoform 2." evidence="8">
    <location>
        <begin position="1"/>
        <end position="578"/>
    </location>
</feature>
<feature type="mutagenesis site" description="Abolishes interaction with ELOC." evidence="1">
    <original>L</original>
    <variation>S</variation>
    <location>
        <position position="18"/>
    </location>
</feature>
<feature type="mutagenesis site" description="Complete loss of N-degron binding." evidence="5">
    <original>W</original>
    <variation>A</variation>
    <location>
        <position position="522"/>
    </location>
</feature>
<feature type="mutagenesis site" description="Complete loss of N-degron binding." evidence="5">
    <original>N</original>
    <variation>A</variation>
    <location>
        <position position="523"/>
    </location>
</feature>
<feature type="mutagenesis site" description="Complete loss of N-degron binding." evidence="4 5">
    <original>D</original>
    <variation>A</variation>
    <location>
        <position position="526"/>
    </location>
</feature>
<feature type="mutagenesis site" description="Complete loss of N-degron binding." evidence="4 5">
    <original>N</original>
    <variation>A</variation>
    <location>
        <position position="567"/>
    </location>
</feature>
<feature type="mutagenesis site" description="Complete loss of N-degron binding." evidence="4 5">
    <original>E</original>
    <variation>A</variation>
    <location>
        <position position="570"/>
    </location>
</feature>
<feature type="sequence conflict" description="In Ref. 2; BAB14596." evidence="9" ref="2">
    <original>W</original>
    <variation>C</variation>
    <location>
        <position position="672"/>
    </location>
</feature>
<feature type="helix" evidence="19">
    <location>
        <begin position="447"/>
        <end position="457"/>
    </location>
</feature>
<feature type="helix" evidence="19">
    <location>
        <begin position="462"/>
        <end position="478"/>
    </location>
</feature>
<feature type="helix" evidence="18">
    <location>
        <begin position="485"/>
        <end position="506"/>
    </location>
</feature>
<feature type="helix" evidence="18">
    <location>
        <begin position="512"/>
        <end position="524"/>
    </location>
</feature>
<feature type="turn" evidence="18">
    <location>
        <begin position="525"/>
        <end position="527"/>
    </location>
</feature>
<feature type="helix" evidence="18">
    <location>
        <begin position="529"/>
        <end position="537"/>
    </location>
</feature>
<feature type="helix" evidence="18">
    <location>
        <begin position="540"/>
        <end position="550"/>
    </location>
</feature>
<feature type="helix" evidence="18">
    <location>
        <begin position="555"/>
        <end position="569"/>
    </location>
</feature>
<feature type="helix" evidence="18">
    <location>
        <begin position="572"/>
        <end position="578"/>
    </location>
</feature>
<feature type="helix" evidence="18">
    <location>
        <begin position="581"/>
        <end position="591"/>
    </location>
</feature>
<feature type="helix" evidence="18">
    <location>
        <begin position="596"/>
        <end position="611"/>
    </location>
</feature>
<feature type="turn" evidence="18">
    <location>
        <begin position="614"/>
        <end position="616"/>
    </location>
</feature>
<feature type="helix" evidence="18">
    <location>
        <begin position="621"/>
        <end position="637"/>
    </location>
</feature>
<feature type="helix" evidence="18">
    <location>
        <begin position="652"/>
        <end position="654"/>
    </location>
</feature>
<feature type="helix" evidence="18">
    <location>
        <begin position="655"/>
        <end position="658"/>
    </location>
</feature>
<feature type="helix" evidence="18">
    <location>
        <begin position="664"/>
        <end position="680"/>
    </location>
</feature>
<feature type="helix" evidence="18">
    <location>
        <begin position="682"/>
        <end position="691"/>
    </location>
</feature>
<feature type="helix" evidence="18">
    <location>
        <begin position="694"/>
        <end position="703"/>
    </location>
</feature>
<feature type="helix" evidence="18">
    <location>
        <begin position="709"/>
        <end position="722"/>
    </location>
</feature>
<protein>
    <recommendedName>
        <fullName evidence="9">Protein zyg-11 homolog B</fullName>
    </recommendedName>
</protein>
<sequence length="744" mass="83921">MPEDQAGAAMEEASPYSLLDICLNFLTTHLEKFCSARQDGTLCLQEPGVFPQEVADRLLRTMAFHGLLNDGTVGIFRGNQMRLKRACIRKAKISAVAFRKAFCHHKLVELDATGVNADITITDIISGLGSNKWIQQNLQCLVLNSLTLSLEDPYERCFSRLSGLRALSITNVLFYNEDLAEVASLPRLESLDISNTSITDITALLACKDRLKSLTMHHLKCLKMTTTQILDVVRELKHLNHLDISDDKQFTSDIALRLLEQKDILPNLVSLDVSGRKHVTDKAVEAFIQQRPSMQFVGLLATDAGYSEFLTGEGHLKVSGEANETQIAEALKRYSERAFFVREALFHLFSLTHVMEKTKPEILKLVVTGMRNHPMNLPVQLAASACVFNLTKQDLAAGMPVRLLADVTHLLLKAMEHFPNHQQLQKNCLLSLCSDRILQDVPFNRFEAAKLVMQWLCNHEDQNMQRMAVAIISILAAKLSTEQTAQLGTELFIVRQLLQIVKQKTNQNSVDTTLKFTLSALWNLTDESPTTCRHFIENQGLELFMRVLESFPTESSIQQKVLGLLNNIAEVQELHSELMWKDFIDHISSLLHSVEVEVSYFAAGIIAHLISRGEQAWTLSRSQRNSLLDDLHSAILKWPTPECEMVAYRSFNPFFPLLGCFTTPGVQLWAVWAMQHVCSKNPSRYCSMLIEEGGLQHLYNIKDHEHTDPHVQQIAVAILDSLEKHIVRHGRPPPCKKQPQARLN</sequence>